<accession>B1MBX3</accession>
<dbReference type="EC" id="4.3.2.10" evidence="1"/>
<dbReference type="EMBL" id="CU458896">
    <property type="protein sequence ID" value="CAM62744.1"/>
    <property type="molecule type" value="Genomic_DNA"/>
</dbReference>
<dbReference type="RefSeq" id="WP_005111203.1">
    <property type="nucleotide sequence ID" value="NZ_MLCG01000003.1"/>
</dbReference>
<dbReference type="SMR" id="B1MBX3"/>
<dbReference type="GeneID" id="93379595"/>
<dbReference type="KEGG" id="mab:MAB_2664c"/>
<dbReference type="UniPathway" id="UPA00031">
    <property type="reaction ID" value="UER00010"/>
</dbReference>
<dbReference type="Proteomes" id="UP000007137">
    <property type="component" value="Chromosome"/>
</dbReference>
<dbReference type="GO" id="GO:0005737">
    <property type="term" value="C:cytoplasm"/>
    <property type="evidence" value="ECO:0007669"/>
    <property type="project" value="UniProtKB-SubCell"/>
</dbReference>
<dbReference type="GO" id="GO:0000107">
    <property type="term" value="F:imidazoleglycerol-phosphate synthase activity"/>
    <property type="evidence" value="ECO:0007669"/>
    <property type="project" value="UniProtKB-UniRule"/>
</dbReference>
<dbReference type="GO" id="GO:0016829">
    <property type="term" value="F:lyase activity"/>
    <property type="evidence" value="ECO:0007669"/>
    <property type="project" value="UniProtKB-KW"/>
</dbReference>
<dbReference type="GO" id="GO:0000105">
    <property type="term" value="P:L-histidine biosynthetic process"/>
    <property type="evidence" value="ECO:0007669"/>
    <property type="project" value="UniProtKB-UniRule"/>
</dbReference>
<dbReference type="CDD" id="cd04731">
    <property type="entry name" value="HisF"/>
    <property type="match status" value="1"/>
</dbReference>
<dbReference type="FunFam" id="3.20.20.70:FF:000006">
    <property type="entry name" value="Imidazole glycerol phosphate synthase subunit HisF"/>
    <property type="match status" value="1"/>
</dbReference>
<dbReference type="Gene3D" id="3.20.20.70">
    <property type="entry name" value="Aldolase class I"/>
    <property type="match status" value="1"/>
</dbReference>
<dbReference type="HAMAP" id="MF_01013">
    <property type="entry name" value="HisF"/>
    <property type="match status" value="1"/>
</dbReference>
<dbReference type="InterPro" id="IPR013785">
    <property type="entry name" value="Aldolase_TIM"/>
</dbReference>
<dbReference type="InterPro" id="IPR006062">
    <property type="entry name" value="His_biosynth"/>
</dbReference>
<dbReference type="InterPro" id="IPR004651">
    <property type="entry name" value="HisF"/>
</dbReference>
<dbReference type="InterPro" id="IPR050064">
    <property type="entry name" value="IGPS_HisA/HisF"/>
</dbReference>
<dbReference type="InterPro" id="IPR011060">
    <property type="entry name" value="RibuloseP-bd_barrel"/>
</dbReference>
<dbReference type="NCBIfam" id="TIGR00735">
    <property type="entry name" value="hisF"/>
    <property type="match status" value="1"/>
</dbReference>
<dbReference type="PANTHER" id="PTHR21235:SF2">
    <property type="entry name" value="IMIDAZOLE GLYCEROL PHOSPHATE SYNTHASE HISHF"/>
    <property type="match status" value="1"/>
</dbReference>
<dbReference type="PANTHER" id="PTHR21235">
    <property type="entry name" value="IMIDAZOLE GLYCEROL PHOSPHATE SYNTHASE SUBUNIT HISF/H IGP SYNTHASE SUBUNIT HISF/H"/>
    <property type="match status" value="1"/>
</dbReference>
<dbReference type="Pfam" id="PF00977">
    <property type="entry name" value="His_biosynth"/>
    <property type="match status" value="1"/>
</dbReference>
<dbReference type="SUPFAM" id="SSF51366">
    <property type="entry name" value="Ribulose-phoshate binding barrel"/>
    <property type="match status" value="1"/>
</dbReference>
<name>HIS6_MYCA9</name>
<gene>
    <name evidence="1" type="primary">hisF</name>
    <name type="ordered locus">MAB_2664c</name>
</gene>
<protein>
    <recommendedName>
        <fullName evidence="1">Imidazole glycerol phosphate synthase subunit HisF</fullName>
        <ecNumber evidence="1">4.3.2.10</ecNumber>
    </recommendedName>
    <alternativeName>
        <fullName evidence="1">IGP synthase cyclase subunit</fullName>
    </alternativeName>
    <alternativeName>
        <fullName evidence="1">IGP synthase subunit HisF</fullName>
    </alternativeName>
    <alternativeName>
        <fullName evidence="1">ImGP synthase subunit HisF</fullName>
        <shortName evidence="1">IGPS subunit HisF</shortName>
    </alternativeName>
</protein>
<proteinExistence type="inferred from homology"/>
<evidence type="ECO:0000255" key="1">
    <source>
        <dbReference type="HAMAP-Rule" id="MF_01013"/>
    </source>
</evidence>
<feature type="chain" id="PRO_1000148930" description="Imidazole glycerol phosphate synthase subunit HisF">
    <location>
        <begin position="1"/>
        <end position="257"/>
    </location>
</feature>
<feature type="active site" evidence="1">
    <location>
        <position position="12"/>
    </location>
</feature>
<feature type="active site" evidence="1">
    <location>
        <position position="131"/>
    </location>
</feature>
<organism>
    <name type="scientific">Mycobacteroides abscessus (strain ATCC 19977 / DSM 44196 / CCUG 20993 / CIP 104536 / JCM 13569 / NCTC 13031 / TMC 1543 / L948)</name>
    <name type="common">Mycobacterium abscessus</name>
    <dbReference type="NCBI Taxonomy" id="561007"/>
    <lineage>
        <taxon>Bacteria</taxon>
        <taxon>Bacillati</taxon>
        <taxon>Actinomycetota</taxon>
        <taxon>Actinomycetes</taxon>
        <taxon>Mycobacteriales</taxon>
        <taxon>Mycobacteriaceae</taxon>
        <taxon>Mycobacteroides</taxon>
        <taxon>Mycobacteroides abscessus</taxon>
    </lineage>
</organism>
<sequence length="257" mass="26501">MSVATRVIACLDVDDGRVVKGVNFENLRDAGDPVELAAAYDAEGVDELTFLDVTASSSGRATMLDVVRRTAEQVFIPLTVGGGVRSVDDVNVLLRAGADKVGVNTAAIARPELLAELAQRFGSQCIVLSVDARRVRDGDVPTSSGWEVTTHGGRRGTGIDAIEWTSRGAELGVGEILLNSMDADGTKAGFDLEMIAAARAAVDVPVIASGGAGAIGHFAPAVQAGADAVLAASVFHFRELTIGEVKAAMAAEGITVR</sequence>
<reference key="1">
    <citation type="journal article" date="2009" name="PLoS ONE">
        <title>Non mycobacterial virulence genes in the genome of the emerging pathogen Mycobacterium abscessus.</title>
        <authorList>
            <person name="Ripoll F."/>
            <person name="Pasek S."/>
            <person name="Schenowitz C."/>
            <person name="Dossat C."/>
            <person name="Barbe V."/>
            <person name="Rottman M."/>
            <person name="Macheras E."/>
            <person name="Heym B."/>
            <person name="Herrmann J.L."/>
            <person name="Daffe M."/>
            <person name="Brosch R."/>
            <person name="Risler J.L."/>
            <person name="Gaillard J.L."/>
        </authorList>
    </citation>
    <scope>NUCLEOTIDE SEQUENCE [LARGE SCALE GENOMIC DNA]</scope>
    <source>
        <strain>ATCC 19977 / DSM 44196 / CCUG 20993 / CIP 104536 / JCM 13569 / NCTC 13031 / TMC 1543 / L948</strain>
    </source>
</reference>
<keyword id="KW-0028">Amino-acid biosynthesis</keyword>
<keyword id="KW-0963">Cytoplasm</keyword>
<keyword id="KW-0368">Histidine biosynthesis</keyword>
<keyword id="KW-0456">Lyase</keyword>
<keyword id="KW-1185">Reference proteome</keyword>
<comment type="function">
    <text evidence="1">IGPS catalyzes the conversion of PRFAR and glutamine to IGP, AICAR and glutamate. The HisF subunit catalyzes the cyclization activity that produces IGP and AICAR from PRFAR using the ammonia provided by the HisH subunit.</text>
</comment>
<comment type="catalytic activity">
    <reaction evidence="1">
        <text>5-[(5-phospho-1-deoxy-D-ribulos-1-ylimino)methylamino]-1-(5-phospho-beta-D-ribosyl)imidazole-4-carboxamide + L-glutamine = D-erythro-1-(imidazol-4-yl)glycerol 3-phosphate + 5-amino-1-(5-phospho-beta-D-ribosyl)imidazole-4-carboxamide + L-glutamate + H(+)</text>
        <dbReference type="Rhea" id="RHEA:24793"/>
        <dbReference type="ChEBI" id="CHEBI:15378"/>
        <dbReference type="ChEBI" id="CHEBI:29985"/>
        <dbReference type="ChEBI" id="CHEBI:58278"/>
        <dbReference type="ChEBI" id="CHEBI:58359"/>
        <dbReference type="ChEBI" id="CHEBI:58475"/>
        <dbReference type="ChEBI" id="CHEBI:58525"/>
        <dbReference type="EC" id="4.3.2.10"/>
    </reaction>
</comment>
<comment type="pathway">
    <text evidence="1">Amino-acid biosynthesis; L-histidine biosynthesis; L-histidine from 5-phospho-alpha-D-ribose 1-diphosphate: step 5/9.</text>
</comment>
<comment type="subunit">
    <text evidence="1">Heterodimer of HisH and HisF.</text>
</comment>
<comment type="subcellular location">
    <subcellularLocation>
        <location evidence="1">Cytoplasm</location>
    </subcellularLocation>
</comment>
<comment type="similarity">
    <text evidence="1">Belongs to the HisA/HisF family.</text>
</comment>